<accession>B9E9H0</accession>
<name>LUTC_MACCJ</name>
<sequence>MERGTIHNKGSFLSNISKNLQREMPQHVERPEWQYRPQDKTLTGLTQDELLEVLRQQCNFIHTDLVETTTDNINETLSQVIEKYGNGEVIAWNDKRFADFGIDLEAHDAFIWDEAKGAENLQVAERANVGITFSDVTLAESGTVVLYADKGKGRSVSLLPATYIAIVPKSTIVPRFTQAAQQMNAMMEDQENFPTCINLITGPSNSADIEMKLVVGVHGPIKATYIVVDDK</sequence>
<keyword id="KW-1185">Reference proteome</keyword>
<gene>
    <name evidence="1" type="primary">lutC</name>
    <name type="ordered locus">MCCL_0174</name>
</gene>
<comment type="function">
    <text evidence="1">Is involved in L-lactate degradation and allows cells to grow with lactate as the sole carbon source.</text>
</comment>
<comment type="similarity">
    <text evidence="1">Belongs to the LutC/YkgG family.</text>
</comment>
<organism>
    <name type="scientific">Macrococcus caseolyticus (strain JCSC5402)</name>
    <name type="common">Macrococcoides caseolyticum</name>
    <dbReference type="NCBI Taxonomy" id="458233"/>
    <lineage>
        <taxon>Bacteria</taxon>
        <taxon>Bacillati</taxon>
        <taxon>Bacillota</taxon>
        <taxon>Bacilli</taxon>
        <taxon>Bacillales</taxon>
        <taxon>Staphylococcaceae</taxon>
        <taxon>Macrococcoides</taxon>
    </lineage>
</organism>
<dbReference type="EMBL" id="AP009484">
    <property type="protein sequence ID" value="BAH16881.1"/>
    <property type="molecule type" value="Genomic_DNA"/>
</dbReference>
<dbReference type="RefSeq" id="WP_012656085.1">
    <property type="nucleotide sequence ID" value="NC_011999.1"/>
</dbReference>
<dbReference type="SMR" id="B9E9H0"/>
<dbReference type="STRING" id="458233.MCCL_0174"/>
<dbReference type="KEGG" id="mcl:MCCL_0174"/>
<dbReference type="eggNOG" id="COG1556">
    <property type="taxonomic scope" value="Bacteria"/>
</dbReference>
<dbReference type="HOGENOM" id="CLU_090664_1_0_9"/>
<dbReference type="OrthoDB" id="9794157at2"/>
<dbReference type="Proteomes" id="UP000001383">
    <property type="component" value="Chromosome"/>
</dbReference>
<dbReference type="GO" id="GO:0006089">
    <property type="term" value="P:lactate metabolic process"/>
    <property type="evidence" value="ECO:0007669"/>
    <property type="project" value="UniProtKB-UniRule"/>
</dbReference>
<dbReference type="Gene3D" id="3.40.50.10420">
    <property type="entry name" value="NagB/RpiA/CoA transferase-like"/>
    <property type="match status" value="1"/>
</dbReference>
<dbReference type="HAMAP" id="MF_02104">
    <property type="entry name" value="LutC"/>
    <property type="match status" value="1"/>
</dbReference>
<dbReference type="InterPro" id="IPR024185">
    <property type="entry name" value="FTHF_cligase-like_sf"/>
</dbReference>
<dbReference type="InterPro" id="IPR003741">
    <property type="entry name" value="LUD_dom"/>
</dbReference>
<dbReference type="InterPro" id="IPR022823">
    <property type="entry name" value="LutC"/>
</dbReference>
<dbReference type="InterPro" id="IPR037171">
    <property type="entry name" value="NagB/RpiA_transferase-like"/>
</dbReference>
<dbReference type="PANTHER" id="PTHR43682">
    <property type="entry name" value="LACTATE UTILIZATION PROTEIN C"/>
    <property type="match status" value="1"/>
</dbReference>
<dbReference type="PANTHER" id="PTHR43682:SF1">
    <property type="entry name" value="LACTATE UTILIZATION PROTEIN C"/>
    <property type="match status" value="1"/>
</dbReference>
<dbReference type="Pfam" id="PF02589">
    <property type="entry name" value="LUD_dom"/>
    <property type="match status" value="1"/>
</dbReference>
<dbReference type="SUPFAM" id="SSF100950">
    <property type="entry name" value="NagB/RpiA/CoA transferase-like"/>
    <property type="match status" value="1"/>
</dbReference>
<feature type="chain" id="PRO_0000384014" description="Lactate utilization protein C">
    <location>
        <begin position="1"/>
        <end position="231"/>
    </location>
</feature>
<proteinExistence type="inferred from homology"/>
<reference key="1">
    <citation type="journal article" date="2009" name="J. Bacteriol.">
        <title>Complete genome sequence of Macrococcus caseolyticus strain JCSCS5402, reflecting the ancestral genome of the human-pathogenic staphylococci.</title>
        <authorList>
            <person name="Baba T."/>
            <person name="Kuwahara-Arai K."/>
            <person name="Uchiyama I."/>
            <person name="Takeuchi F."/>
            <person name="Ito T."/>
            <person name="Hiramatsu K."/>
        </authorList>
    </citation>
    <scope>NUCLEOTIDE SEQUENCE [LARGE SCALE GENOMIC DNA]</scope>
    <source>
        <strain>JCSC5402</strain>
    </source>
</reference>
<protein>
    <recommendedName>
        <fullName evidence="1">Lactate utilization protein C</fullName>
    </recommendedName>
</protein>
<evidence type="ECO:0000255" key="1">
    <source>
        <dbReference type="HAMAP-Rule" id="MF_02104"/>
    </source>
</evidence>